<name>CAPP_GLOVI</name>
<evidence type="ECO:0000255" key="1">
    <source>
        <dbReference type="HAMAP-Rule" id="MF_00595"/>
    </source>
</evidence>
<sequence length="939" mass="107819">MNWDTPIDLAAAGSPSALSHQSLRDNIELVEQLLRQVAAQEGGGDLVELLDRLWASHQDRTGEGLALIRELSLEKSVLAIRAFSIYFQLINIVEQHHERKRLRLQASFSADTAQPGSFCWLFDEMKSLGVSTPEIERVLQQLDVRLVFTAHPTEIVRRTIRTKHRRIVHLLDDLDNALSEWQQQQVHTTMLEEIRIWWRTDELHQVRPTVLDEVAHTVHYFEEVLFEAMPRVRSELVRCLDMFHPSLTRSLGTFCRFGSWVGSDRDGNPSVNALVTWKTACHQRSRVLAKYIKSVERLRDLLSLAEGNPPQDLLLALEQDQRDLGEVYERYSVVYLQEPYRLKLSYILERLEHTRERNAWLEVHGPQRLSQPDEPGWLHYYRHAHELLAELHLLRQCLRTTGIGCRPLETLIDQVEVFGFHLAGLDVRQDSTRHEDTLTEVSAKLRLTATPYAELDEQARLEWLVRELQTLRPLIPAELPFSARTEETIQTFRMIRRLQKEFGSEICHTYIISMSKQASDLLEVLLLAEEAGLFDPATGTGTLMVVPLFETVEDLRNAPHVLEQLFSLPLYRCYLTCHQNLQEVMLGYSDSNKDSGFLSSSWEIFLAQQHIQQVARRHGVQLRIFHGRGGTVGRGGGPSYQAILAQPDGTVSGRIKITEQGEVLASKYSLFELAAFNIETVTAAVIQASVLPTSPPGSRNWELRLQELSDVARRTYRQLVYEQEGFIDFFCHVTPIDEISQLQISSRPSRREGRRDLASLRAIPWVFSWTQSRFLLQAWYGLGTALDGFIRCNRERNLAELRSMYRQWPFFRTLISKVEMTLAKVDLQVAANYVQELLPKEHEHTGECIFALIAAELERTRECVLAITEHRQLLEDNPPLQRSIALRNATIAPLGYLQATLLKYLRYENRQPRSYSRNELLRGALLTINGIAAGMRNTG</sequence>
<proteinExistence type="inferred from homology"/>
<reference key="1">
    <citation type="journal article" date="2003" name="DNA Res.">
        <title>Complete genome structure of Gloeobacter violaceus PCC 7421, a cyanobacterium that lacks thylakoids.</title>
        <authorList>
            <person name="Nakamura Y."/>
            <person name="Kaneko T."/>
            <person name="Sato S."/>
            <person name="Mimuro M."/>
            <person name="Miyashita H."/>
            <person name="Tsuchiya T."/>
            <person name="Sasamoto S."/>
            <person name="Watanabe A."/>
            <person name="Kawashima K."/>
            <person name="Kishida Y."/>
            <person name="Kiyokawa C."/>
            <person name="Kohara M."/>
            <person name="Matsumoto M."/>
            <person name="Matsuno A."/>
            <person name="Nakazaki N."/>
            <person name="Shimpo S."/>
            <person name="Takeuchi C."/>
            <person name="Yamada M."/>
            <person name="Tabata S."/>
        </authorList>
    </citation>
    <scope>NUCLEOTIDE SEQUENCE [LARGE SCALE GENOMIC DNA]</scope>
    <source>
        <strain>ATCC 29082 / PCC 7421</strain>
    </source>
</reference>
<keyword id="KW-0120">Carbon dioxide fixation</keyword>
<keyword id="KW-0456">Lyase</keyword>
<keyword id="KW-0460">Magnesium</keyword>
<keyword id="KW-1185">Reference proteome</keyword>
<gene>
    <name evidence="1" type="primary">ppc</name>
    <name type="ordered locus">gll0414</name>
</gene>
<comment type="function">
    <text evidence="1">Forms oxaloacetate, a four-carbon dicarboxylic acid source for the tricarboxylic acid cycle.</text>
</comment>
<comment type="catalytic activity">
    <reaction evidence="1">
        <text>oxaloacetate + phosphate = phosphoenolpyruvate + hydrogencarbonate</text>
        <dbReference type="Rhea" id="RHEA:28370"/>
        <dbReference type="ChEBI" id="CHEBI:16452"/>
        <dbReference type="ChEBI" id="CHEBI:17544"/>
        <dbReference type="ChEBI" id="CHEBI:43474"/>
        <dbReference type="ChEBI" id="CHEBI:58702"/>
        <dbReference type="EC" id="4.1.1.31"/>
    </reaction>
</comment>
<comment type="cofactor">
    <cofactor evidence="1">
        <name>Mg(2+)</name>
        <dbReference type="ChEBI" id="CHEBI:18420"/>
    </cofactor>
</comment>
<comment type="similarity">
    <text evidence="1">Belongs to the PEPCase type 1 family.</text>
</comment>
<organism>
    <name type="scientific">Gloeobacter violaceus (strain ATCC 29082 / PCC 7421)</name>
    <dbReference type="NCBI Taxonomy" id="251221"/>
    <lineage>
        <taxon>Bacteria</taxon>
        <taxon>Bacillati</taxon>
        <taxon>Cyanobacteriota</taxon>
        <taxon>Cyanophyceae</taxon>
        <taxon>Gloeobacterales</taxon>
        <taxon>Gloeobacteraceae</taxon>
        <taxon>Gloeobacter</taxon>
    </lineage>
</organism>
<accession>Q7NNJ7</accession>
<dbReference type="EC" id="4.1.1.31" evidence="1"/>
<dbReference type="EMBL" id="BA000045">
    <property type="protein sequence ID" value="BAC88355.1"/>
    <property type="molecule type" value="Genomic_DNA"/>
</dbReference>
<dbReference type="RefSeq" id="NP_923360.1">
    <property type="nucleotide sequence ID" value="NC_005125.1"/>
</dbReference>
<dbReference type="RefSeq" id="WP_011140417.1">
    <property type="nucleotide sequence ID" value="NC_005125.1"/>
</dbReference>
<dbReference type="SMR" id="Q7NNJ7"/>
<dbReference type="STRING" id="251221.gene:10757886"/>
<dbReference type="EnsemblBacteria" id="BAC88355">
    <property type="protein sequence ID" value="BAC88355"/>
    <property type="gene ID" value="BAC88355"/>
</dbReference>
<dbReference type="KEGG" id="gvi:gll0414"/>
<dbReference type="PATRIC" id="fig|251221.4.peg.421"/>
<dbReference type="eggNOG" id="COG2352">
    <property type="taxonomic scope" value="Bacteria"/>
</dbReference>
<dbReference type="HOGENOM" id="CLU_006557_2_0_3"/>
<dbReference type="InParanoid" id="Q7NNJ7"/>
<dbReference type="OrthoDB" id="9768133at2"/>
<dbReference type="PhylomeDB" id="Q7NNJ7"/>
<dbReference type="Proteomes" id="UP000000557">
    <property type="component" value="Chromosome"/>
</dbReference>
<dbReference type="GO" id="GO:0005829">
    <property type="term" value="C:cytosol"/>
    <property type="evidence" value="ECO:0000318"/>
    <property type="project" value="GO_Central"/>
</dbReference>
<dbReference type="GO" id="GO:0000287">
    <property type="term" value="F:magnesium ion binding"/>
    <property type="evidence" value="ECO:0007669"/>
    <property type="project" value="UniProtKB-UniRule"/>
</dbReference>
<dbReference type="GO" id="GO:0008964">
    <property type="term" value="F:phosphoenolpyruvate carboxylase activity"/>
    <property type="evidence" value="ECO:0000318"/>
    <property type="project" value="GO_Central"/>
</dbReference>
<dbReference type="GO" id="GO:0015977">
    <property type="term" value="P:carbon fixation"/>
    <property type="evidence" value="ECO:0007669"/>
    <property type="project" value="UniProtKB-UniRule"/>
</dbReference>
<dbReference type="GO" id="GO:0006107">
    <property type="term" value="P:oxaloacetate metabolic process"/>
    <property type="evidence" value="ECO:0007669"/>
    <property type="project" value="UniProtKB-UniRule"/>
</dbReference>
<dbReference type="GO" id="GO:0006099">
    <property type="term" value="P:tricarboxylic acid cycle"/>
    <property type="evidence" value="ECO:0007669"/>
    <property type="project" value="InterPro"/>
</dbReference>
<dbReference type="Gene3D" id="1.20.1440.90">
    <property type="entry name" value="Phosphoenolpyruvate/pyruvate domain"/>
    <property type="match status" value="1"/>
</dbReference>
<dbReference type="HAMAP" id="MF_00595">
    <property type="entry name" value="PEPcase_type1"/>
    <property type="match status" value="1"/>
</dbReference>
<dbReference type="InterPro" id="IPR021135">
    <property type="entry name" value="PEP_COase"/>
</dbReference>
<dbReference type="InterPro" id="IPR022805">
    <property type="entry name" value="PEP_COase_bac/pln-type"/>
</dbReference>
<dbReference type="InterPro" id="IPR018129">
    <property type="entry name" value="PEP_COase_Lys_AS"/>
</dbReference>
<dbReference type="InterPro" id="IPR033129">
    <property type="entry name" value="PEPCASE_His_AS"/>
</dbReference>
<dbReference type="InterPro" id="IPR015813">
    <property type="entry name" value="Pyrv/PenolPyrv_kinase-like_dom"/>
</dbReference>
<dbReference type="NCBIfam" id="NF000584">
    <property type="entry name" value="PRK00009.1"/>
    <property type="match status" value="1"/>
</dbReference>
<dbReference type="PANTHER" id="PTHR30523">
    <property type="entry name" value="PHOSPHOENOLPYRUVATE CARBOXYLASE"/>
    <property type="match status" value="1"/>
</dbReference>
<dbReference type="PANTHER" id="PTHR30523:SF6">
    <property type="entry name" value="PHOSPHOENOLPYRUVATE CARBOXYLASE"/>
    <property type="match status" value="1"/>
</dbReference>
<dbReference type="Pfam" id="PF00311">
    <property type="entry name" value="PEPcase"/>
    <property type="match status" value="1"/>
</dbReference>
<dbReference type="PRINTS" id="PR00150">
    <property type="entry name" value="PEPCARBXLASE"/>
</dbReference>
<dbReference type="SUPFAM" id="SSF51621">
    <property type="entry name" value="Phosphoenolpyruvate/pyruvate domain"/>
    <property type="match status" value="1"/>
</dbReference>
<dbReference type="PROSITE" id="PS00781">
    <property type="entry name" value="PEPCASE_1"/>
    <property type="match status" value="1"/>
</dbReference>
<dbReference type="PROSITE" id="PS00393">
    <property type="entry name" value="PEPCASE_2"/>
    <property type="match status" value="1"/>
</dbReference>
<protein>
    <recommendedName>
        <fullName evidence="1">Phosphoenolpyruvate carboxylase</fullName>
        <shortName evidence="1">PEPC</shortName>
        <shortName evidence="1">PEPCase</shortName>
        <ecNumber evidence="1">4.1.1.31</ecNumber>
    </recommendedName>
</protein>
<feature type="chain" id="PRO_0000166596" description="Phosphoenolpyruvate carboxylase">
    <location>
        <begin position="1"/>
        <end position="939"/>
    </location>
</feature>
<feature type="active site" evidence="1">
    <location>
        <position position="151"/>
    </location>
</feature>
<feature type="active site" evidence="1">
    <location>
        <position position="593"/>
    </location>
</feature>